<gene>
    <name evidence="1" type="primary">rppH</name>
    <name evidence="1" type="synonym">nudH</name>
    <name type="ordered locus">Sfri_2945</name>
</gene>
<organism>
    <name type="scientific">Shewanella frigidimarina (strain NCIMB 400)</name>
    <dbReference type="NCBI Taxonomy" id="318167"/>
    <lineage>
        <taxon>Bacteria</taxon>
        <taxon>Pseudomonadati</taxon>
        <taxon>Pseudomonadota</taxon>
        <taxon>Gammaproteobacteria</taxon>
        <taxon>Alteromonadales</taxon>
        <taxon>Shewanellaceae</taxon>
        <taxon>Shewanella</taxon>
    </lineage>
</organism>
<feature type="chain" id="PRO_1000021996" description="RNA pyrophosphohydrolase">
    <location>
        <begin position="1"/>
        <end position="172"/>
    </location>
</feature>
<feature type="domain" description="Nudix hydrolase" evidence="1">
    <location>
        <begin position="6"/>
        <end position="149"/>
    </location>
</feature>
<feature type="short sequence motif" description="Nudix box">
    <location>
        <begin position="38"/>
        <end position="59"/>
    </location>
</feature>
<evidence type="ECO:0000255" key="1">
    <source>
        <dbReference type="HAMAP-Rule" id="MF_00298"/>
    </source>
</evidence>
<proteinExistence type="inferred from homology"/>
<comment type="function">
    <text evidence="1">Accelerates the degradation of transcripts by removing pyrophosphate from the 5'-end of triphosphorylated RNA, leading to a more labile monophosphorylated state that can stimulate subsequent ribonuclease cleavage.</text>
</comment>
<comment type="cofactor">
    <cofactor evidence="1">
        <name>a divalent metal cation</name>
        <dbReference type="ChEBI" id="CHEBI:60240"/>
    </cofactor>
</comment>
<comment type="similarity">
    <text evidence="1">Belongs to the Nudix hydrolase family. RppH subfamily.</text>
</comment>
<sequence>MIDSDGFRANVGIIICNKFGQVMWARRFGQHSWQFPQGGLDDGESVEEAMYRELYEEVGLRPEHVQILTSTRSWLRYRLPKRLVRQESKPVCIGQKQKWFLLQLKGHDNTINLNSSGHPEFDDWRWVSYWYPVRQVVSFKRDVYRKVMKEFASTTLALQTREFSKKRSKQRS</sequence>
<dbReference type="EC" id="3.6.1.-" evidence="1"/>
<dbReference type="EMBL" id="CP000447">
    <property type="protein sequence ID" value="ABI72784.1"/>
    <property type="molecule type" value="Genomic_DNA"/>
</dbReference>
<dbReference type="RefSeq" id="WP_011638393.1">
    <property type="nucleotide sequence ID" value="NC_008345.1"/>
</dbReference>
<dbReference type="SMR" id="Q07YY0"/>
<dbReference type="STRING" id="318167.Sfri_2945"/>
<dbReference type="KEGG" id="sfr:Sfri_2945"/>
<dbReference type="eggNOG" id="COG0494">
    <property type="taxonomic scope" value="Bacteria"/>
</dbReference>
<dbReference type="HOGENOM" id="CLU_087195_3_2_6"/>
<dbReference type="OrthoDB" id="9816040at2"/>
<dbReference type="Proteomes" id="UP000000684">
    <property type="component" value="Chromosome"/>
</dbReference>
<dbReference type="GO" id="GO:0005737">
    <property type="term" value="C:cytoplasm"/>
    <property type="evidence" value="ECO:0007669"/>
    <property type="project" value="TreeGrafter"/>
</dbReference>
<dbReference type="GO" id="GO:0034353">
    <property type="term" value="F:mRNA 5'-diphosphatase activity"/>
    <property type="evidence" value="ECO:0007669"/>
    <property type="project" value="TreeGrafter"/>
</dbReference>
<dbReference type="GO" id="GO:0006402">
    <property type="term" value="P:mRNA catabolic process"/>
    <property type="evidence" value="ECO:0007669"/>
    <property type="project" value="TreeGrafter"/>
</dbReference>
<dbReference type="CDD" id="cd03671">
    <property type="entry name" value="NUDIX_Ap4A_hydrolase_plant_like"/>
    <property type="match status" value="1"/>
</dbReference>
<dbReference type="FunFam" id="3.90.79.10:FF:000001">
    <property type="entry name" value="RNA pyrophosphohydrolase"/>
    <property type="match status" value="1"/>
</dbReference>
<dbReference type="Gene3D" id="3.90.79.10">
    <property type="entry name" value="Nucleoside Triphosphate Pyrophosphohydrolase"/>
    <property type="match status" value="1"/>
</dbReference>
<dbReference type="HAMAP" id="MF_00298">
    <property type="entry name" value="Nudix_RppH"/>
    <property type="match status" value="1"/>
</dbReference>
<dbReference type="InterPro" id="IPR020476">
    <property type="entry name" value="Nudix_hydrolase"/>
</dbReference>
<dbReference type="InterPro" id="IPR015797">
    <property type="entry name" value="NUDIX_hydrolase-like_dom_sf"/>
</dbReference>
<dbReference type="InterPro" id="IPR020084">
    <property type="entry name" value="NUDIX_hydrolase_CS"/>
</dbReference>
<dbReference type="InterPro" id="IPR000086">
    <property type="entry name" value="NUDIX_hydrolase_dom"/>
</dbReference>
<dbReference type="InterPro" id="IPR022927">
    <property type="entry name" value="RppH"/>
</dbReference>
<dbReference type="NCBIfam" id="NF001934">
    <property type="entry name" value="PRK00714.1-1"/>
    <property type="match status" value="1"/>
</dbReference>
<dbReference type="NCBIfam" id="NF001936">
    <property type="entry name" value="PRK00714.1-3"/>
    <property type="match status" value="1"/>
</dbReference>
<dbReference type="NCBIfam" id="NF001937">
    <property type="entry name" value="PRK00714.1-4"/>
    <property type="match status" value="1"/>
</dbReference>
<dbReference type="NCBIfam" id="NF001938">
    <property type="entry name" value="PRK00714.1-5"/>
    <property type="match status" value="1"/>
</dbReference>
<dbReference type="PANTHER" id="PTHR23114">
    <property type="entry name" value="M7GPPPN-MRNA HYDROLASE"/>
    <property type="match status" value="1"/>
</dbReference>
<dbReference type="PANTHER" id="PTHR23114:SF17">
    <property type="entry name" value="M7GPPPN-MRNA HYDROLASE"/>
    <property type="match status" value="1"/>
</dbReference>
<dbReference type="Pfam" id="PF00293">
    <property type="entry name" value="NUDIX"/>
    <property type="match status" value="1"/>
</dbReference>
<dbReference type="PRINTS" id="PR00502">
    <property type="entry name" value="NUDIXFAMILY"/>
</dbReference>
<dbReference type="SUPFAM" id="SSF55811">
    <property type="entry name" value="Nudix"/>
    <property type="match status" value="1"/>
</dbReference>
<dbReference type="PROSITE" id="PS51462">
    <property type="entry name" value="NUDIX"/>
    <property type="match status" value="1"/>
</dbReference>
<dbReference type="PROSITE" id="PS00893">
    <property type="entry name" value="NUDIX_BOX"/>
    <property type="match status" value="1"/>
</dbReference>
<protein>
    <recommendedName>
        <fullName evidence="1">RNA pyrophosphohydrolase</fullName>
        <ecNumber evidence="1">3.6.1.-</ecNumber>
    </recommendedName>
    <alternativeName>
        <fullName evidence="1">(Di)nucleoside polyphosphate hydrolase</fullName>
    </alternativeName>
</protein>
<reference key="1">
    <citation type="submission" date="2006-08" db="EMBL/GenBank/DDBJ databases">
        <title>Complete sequence of Shewanella frigidimarina NCIMB 400.</title>
        <authorList>
            <consortium name="US DOE Joint Genome Institute"/>
            <person name="Copeland A."/>
            <person name="Lucas S."/>
            <person name="Lapidus A."/>
            <person name="Barry K."/>
            <person name="Detter J.C."/>
            <person name="Glavina del Rio T."/>
            <person name="Hammon N."/>
            <person name="Israni S."/>
            <person name="Dalin E."/>
            <person name="Tice H."/>
            <person name="Pitluck S."/>
            <person name="Fredrickson J.K."/>
            <person name="Kolker E."/>
            <person name="McCuel L.A."/>
            <person name="DiChristina T."/>
            <person name="Nealson K.H."/>
            <person name="Newman D."/>
            <person name="Tiedje J.M."/>
            <person name="Zhou J."/>
            <person name="Romine M.F."/>
            <person name="Culley D.E."/>
            <person name="Serres M."/>
            <person name="Chertkov O."/>
            <person name="Brettin T."/>
            <person name="Bruce D."/>
            <person name="Han C."/>
            <person name="Tapia R."/>
            <person name="Gilna P."/>
            <person name="Schmutz J."/>
            <person name="Larimer F."/>
            <person name="Land M."/>
            <person name="Hauser L."/>
            <person name="Kyrpides N."/>
            <person name="Mikhailova N."/>
            <person name="Richardson P."/>
        </authorList>
    </citation>
    <scope>NUCLEOTIDE SEQUENCE [LARGE SCALE GENOMIC DNA]</scope>
    <source>
        <strain>NCIMB 400</strain>
    </source>
</reference>
<accession>Q07YY0</accession>
<keyword id="KW-0378">Hydrolase</keyword>
<keyword id="KW-1185">Reference proteome</keyword>
<name>RPPH_SHEFN</name>